<protein>
    <recommendedName>
        <fullName evidence="10">Molybdate import ATP-binding protein MolC</fullName>
        <ecNumber evidence="11">7.3.2.5</ecNumber>
    </recommendedName>
</protein>
<dbReference type="EC" id="7.3.2.5" evidence="11"/>
<dbReference type="EMBL" id="L42023">
    <property type="protein sequence ID" value="AAC23118.1"/>
    <property type="molecule type" value="Genomic_DNA"/>
</dbReference>
<dbReference type="PIR" id="F64125">
    <property type="entry name" value="F64125"/>
</dbReference>
<dbReference type="RefSeq" id="NP_439621.1">
    <property type="nucleotide sequence ID" value="NC_000907.1"/>
</dbReference>
<dbReference type="PDB" id="2NQ2">
    <property type="method" value="X-ray"/>
    <property type="resolution" value="2.40 A"/>
    <property type="chains" value="C/D=1-253"/>
</dbReference>
<dbReference type="PDBsum" id="2NQ2"/>
<dbReference type="SMR" id="Q57399"/>
<dbReference type="DIP" id="DIP-58990N"/>
<dbReference type="IntAct" id="Q57399">
    <property type="interactions" value="2"/>
</dbReference>
<dbReference type="STRING" id="71421.HI_1470"/>
<dbReference type="TCDB" id="3.A.1.14.11">
    <property type="family name" value="the atp-binding cassette (abc) superfamily"/>
</dbReference>
<dbReference type="EnsemblBacteria" id="AAC23118">
    <property type="protein sequence ID" value="AAC23118"/>
    <property type="gene ID" value="HI_1470"/>
</dbReference>
<dbReference type="KEGG" id="hin:HI_1470"/>
<dbReference type="PATRIC" id="fig|71421.8.peg.1537"/>
<dbReference type="eggNOG" id="COG1120">
    <property type="taxonomic scope" value="Bacteria"/>
</dbReference>
<dbReference type="HOGENOM" id="CLU_000604_1_11_6"/>
<dbReference type="OrthoDB" id="5292475at2"/>
<dbReference type="PhylomeDB" id="Q57399"/>
<dbReference type="BioCyc" id="HINF71421:G1GJ1-1495-MONOMER"/>
<dbReference type="BRENDA" id="7.3.2.5">
    <property type="organism ID" value="2529"/>
</dbReference>
<dbReference type="EvolutionaryTrace" id="Q57399"/>
<dbReference type="Proteomes" id="UP000000579">
    <property type="component" value="Chromosome"/>
</dbReference>
<dbReference type="GO" id="GO:0043190">
    <property type="term" value="C:ATP-binding cassette (ABC) transporter complex"/>
    <property type="evidence" value="ECO:0000318"/>
    <property type="project" value="GO_Central"/>
</dbReference>
<dbReference type="GO" id="GO:0015412">
    <property type="term" value="F:ABC-type molybdate transporter activity"/>
    <property type="evidence" value="ECO:0007669"/>
    <property type="project" value="UniProtKB-EC"/>
</dbReference>
<dbReference type="GO" id="GO:0005524">
    <property type="term" value="F:ATP binding"/>
    <property type="evidence" value="ECO:0007669"/>
    <property type="project" value="UniProtKB-KW"/>
</dbReference>
<dbReference type="GO" id="GO:0016887">
    <property type="term" value="F:ATP hydrolysis activity"/>
    <property type="evidence" value="ECO:0007669"/>
    <property type="project" value="InterPro"/>
</dbReference>
<dbReference type="GO" id="GO:0042626">
    <property type="term" value="F:ATPase-coupled transmembrane transporter activity"/>
    <property type="evidence" value="ECO:0000318"/>
    <property type="project" value="GO_Central"/>
</dbReference>
<dbReference type="FunFam" id="3.40.50.300:FF:000134">
    <property type="entry name" value="Iron-enterobactin ABC transporter ATP-binding protein"/>
    <property type="match status" value="1"/>
</dbReference>
<dbReference type="Gene3D" id="3.40.50.300">
    <property type="entry name" value="P-loop containing nucleotide triphosphate hydrolases"/>
    <property type="match status" value="1"/>
</dbReference>
<dbReference type="InterPro" id="IPR003593">
    <property type="entry name" value="AAA+_ATPase"/>
</dbReference>
<dbReference type="InterPro" id="IPR003439">
    <property type="entry name" value="ABC_transporter-like_ATP-bd"/>
</dbReference>
<dbReference type="InterPro" id="IPR017871">
    <property type="entry name" value="ABC_transporter-like_CS"/>
</dbReference>
<dbReference type="InterPro" id="IPR050153">
    <property type="entry name" value="Metal_Ion_Import_ABC"/>
</dbReference>
<dbReference type="InterPro" id="IPR027417">
    <property type="entry name" value="P-loop_NTPase"/>
</dbReference>
<dbReference type="PANTHER" id="PTHR42734">
    <property type="entry name" value="METAL TRANSPORT SYSTEM ATP-BINDING PROTEIN TM_0124-RELATED"/>
    <property type="match status" value="1"/>
</dbReference>
<dbReference type="PANTHER" id="PTHR42734:SF6">
    <property type="entry name" value="MOLYBDATE IMPORT ATP-BINDING PROTEIN MOLC"/>
    <property type="match status" value="1"/>
</dbReference>
<dbReference type="Pfam" id="PF00005">
    <property type="entry name" value="ABC_tran"/>
    <property type="match status" value="1"/>
</dbReference>
<dbReference type="SMART" id="SM00382">
    <property type="entry name" value="AAA"/>
    <property type="match status" value="1"/>
</dbReference>
<dbReference type="SUPFAM" id="SSF52540">
    <property type="entry name" value="P-loop containing nucleoside triphosphate hydrolases"/>
    <property type="match status" value="1"/>
</dbReference>
<dbReference type="PROSITE" id="PS00211">
    <property type="entry name" value="ABC_TRANSPORTER_1"/>
    <property type="match status" value="1"/>
</dbReference>
<dbReference type="PROSITE" id="PS50893">
    <property type="entry name" value="ABC_TRANSPORTER_2"/>
    <property type="match status" value="1"/>
</dbReference>
<keyword id="KW-0002">3D-structure</keyword>
<keyword id="KW-0067">ATP-binding</keyword>
<keyword id="KW-0997">Cell inner membrane</keyword>
<keyword id="KW-1003">Cell membrane</keyword>
<keyword id="KW-0406">Ion transport</keyword>
<keyword id="KW-0472">Membrane</keyword>
<keyword id="KW-0500">Molybdenum</keyword>
<keyword id="KW-0547">Nucleotide-binding</keyword>
<keyword id="KW-1185">Reference proteome</keyword>
<keyword id="KW-1278">Translocase</keyword>
<keyword id="KW-0813">Transport</keyword>
<comment type="function">
    <text evidence="5 8">Part of the ABC transporter complex MolBCA involved in molybdate import (PubMed:22078568, PubMed:24722984). Responsible for energy coupling to the transport system (PubMed:24722984). Functions as a low-affinity molybdate transporter (PubMed:24722984).</text>
</comment>
<comment type="catalytic activity">
    <reaction evidence="11">
        <text>molybdate(out) + ATP + H2O = molybdate(in) + ADP + phosphate + H(+)</text>
        <dbReference type="Rhea" id="RHEA:22020"/>
        <dbReference type="ChEBI" id="CHEBI:15377"/>
        <dbReference type="ChEBI" id="CHEBI:15378"/>
        <dbReference type="ChEBI" id="CHEBI:30616"/>
        <dbReference type="ChEBI" id="CHEBI:36264"/>
        <dbReference type="ChEBI" id="CHEBI:43474"/>
        <dbReference type="ChEBI" id="CHEBI:456216"/>
        <dbReference type="EC" id="7.3.2.5"/>
    </reaction>
</comment>
<comment type="activity regulation">
    <text evidence="6">The MolBCA complex shows a decrease in affinity in the presence of increasing concentrations of substrate and nucleotide.</text>
</comment>
<comment type="subunit">
    <text evidence="2 3 4 6 7">The complex is composed of two ATP-binding proteins (MolC), two transmembrane proteins (MolB) and a solute-binding protein (MolA).</text>
</comment>
<comment type="interaction">
    <interactant intactId="EBI-9013875">
        <id>Q57399</id>
    </interactant>
    <interactant intactId="EBI-9013882">
        <id>Q57130</id>
        <label>molB</label>
    </interactant>
    <organismsDiffer>false</organismsDiffer>
    <experiments>2</experiments>
</comment>
<comment type="subcellular location">
    <subcellularLocation>
        <location evidence="2">Cell inner membrane</location>
        <topology evidence="2">Peripheral membrane protein</topology>
    </subcellularLocation>
</comment>
<comment type="domain">
    <text evidence="3 7">The transition from the outward-facing to the inward-facing conformation is realized through the asymmetric motion of individual subunits of the transporter (PubMed:19254551). Nucleotide binding is coupled to a conformational shift at the periplasmic gate. This shift is akin to unlocking a swinging door: allowing just enough space for molybdate to slip into the cell. The lower cytoplasmic gate, identified as gate I, remains open throughout the MolBC-A mechanism, and cytoplasmic gate II closes in the presence of nucleotide (PubMed:23709218).</text>
</comment>
<comment type="similarity">
    <text evidence="10">Belongs to the ABC transporter superfamily.</text>
</comment>
<accession>Q57399</accession>
<accession>O05064</accession>
<name>MOLC_HAEIN</name>
<evidence type="ECO:0000255" key="1">
    <source>
        <dbReference type="PROSITE-ProRule" id="PRU00434"/>
    </source>
</evidence>
<evidence type="ECO:0000269" key="2">
    <source>
    </source>
</evidence>
<evidence type="ECO:0000269" key="3">
    <source>
    </source>
</evidence>
<evidence type="ECO:0000269" key="4">
    <source>
    </source>
</evidence>
<evidence type="ECO:0000269" key="5">
    <source>
    </source>
</evidence>
<evidence type="ECO:0000269" key="6">
    <source>
    </source>
</evidence>
<evidence type="ECO:0000269" key="7">
    <source>
    </source>
</evidence>
<evidence type="ECO:0000269" key="8">
    <source>
    </source>
</evidence>
<evidence type="ECO:0000303" key="9">
    <source>
    </source>
</evidence>
<evidence type="ECO:0000305" key="10"/>
<evidence type="ECO:0000305" key="11">
    <source>
    </source>
</evidence>
<evidence type="ECO:0007744" key="12">
    <source>
        <dbReference type="PDB" id="2NQ2"/>
    </source>
</evidence>
<evidence type="ECO:0007829" key="13">
    <source>
        <dbReference type="PDB" id="2NQ2"/>
    </source>
</evidence>
<proteinExistence type="evidence at protein level"/>
<reference key="1">
    <citation type="journal article" date="1995" name="Science">
        <title>Whole-genome random sequencing and assembly of Haemophilus influenzae Rd.</title>
        <authorList>
            <person name="Fleischmann R.D."/>
            <person name="Adams M.D."/>
            <person name="White O."/>
            <person name="Clayton R.A."/>
            <person name="Kirkness E.F."/>
            <person name="Kerlavage A.R."/>
            <person name="Bult C.J."/>
            <person name="Tomb J.-F."/>
            <person name="Dougherty B.A."/>
            <person name="Merrick J.M."/>
            <person name="McKenney K."/>
            <person name="Sutton G.G."/>
            <person name="FitzHugh W."/>
            <person name="Fields C.A."/>
            <person name="Gocayne J.D."/>
            <person name="Scott J.D."/>
            <person name="Shirley R."/>
            <person name="Liu L.-I."/>
            <person name="Glodek A."/>
            <person name="Kelley J.M."/>
            <person name="Weidman J.F."/>
            <person name="Phillips C.A."/>
            <person name="Spriggs T."/>
            <person name="Hedblom E."/>
            <person name="Cotton M.D."/>
            <person name="Utterback T.R."/>
            <person name="Hanna M.C."/>
            <person name="Nguyen D.T."/>
            <person name="Saudek D.M."/>
            <person name="Brandon R.C."/>
            <person name="Fine L.D."/>
            <person name="Fritchman J.L."/>
            <person name="Fuhrmann J.L."/>
            <person name="Geoghagen N.S.M."/>
            <person name="Gnehm C.L."/>
            <person name="McDonald L.A."/>
            <person name="Small K.V."/>
            <person name="Fraser C.M."/>
            <person name="Smith H.O."/>
            <person name="Venter J.C."/>
        </authorList>
    </citation>
    <scope>NUCLEOTIDE SEQUENCE [LARGE SCALE GENOMIC DNA]</scope>
    <source>
        <strain>ATCC 51907 / DSM 11121 / KW20 / Rd</strain>
    </source>
</reference>
<reference key="2">
    <citation type="journal article" date="2009" name="Biophys. J.">
        <title>Asymmetric conformational flexibility in the ATP-binding cassette transporter HI1470/1.</title>
        <authorList>
            <person name="Weng J."/>
            <person name="Ma J."/>
            <person name="Fan K."/>
            <person name="Wang W."/>
        </authorList>
    </citation>
    <scope>SUBUNIT</scope>
    <scope>DOMAIN</scope>
</reference>
<reference key="3">
    <citation type="journal article" date="2010" name="Nat. Struct. Mol. Biol.">
        <title>A distinct mechanism for the ABC transporter BtuCD-BtuF revealed by the dynamics of complex formation.</title>
        <authorList>
            <person name="Lewinson O."/>
            <person name="Lee A.T."/>
            <person name="Locher K.P."/>
            <person name="Rees D.C."/>
        </authorList>
    </citation>
    <scope>SUBUNIT</scope>
</reference>
<reference key="4">
    <citation type="journal article" date="2011" name="Structure">
        <title>Classification of a Haemophilus influenzae ABC transporter HI1470/71 through its cognate molybdate periplasmic binding protein, MolA.</title>
        <authorList>
            <person name="Tirado-Lee L."/>
            <person name="Lee A."/>
            <person name="Rees D.C."/>
            <person name="Pinkett H.W."/>
        </authorList>
    </citation>
    <scope>FUNCTION</scope>
</reference>
<reference key="5">
    <citation type="journal article" date="2013" name="Proc. Natl. Acad. Sci. U.S.A.">
        <title>Two molybdate/tungstate ABC transporters that interact very differently with their substrate binding proteins.</title>
        <authorList>
            <person name="Vigonsky E."/>
            <person name="Ovcharenko E."/>
            <person name="Lewinson O."/>
        </authorList>
    </citation>
    <scope>SUBUNIT</scope>
    <scope>ACTIVITY REGULATION</scope>
</reference>
<reference key="6">
    <citation type="journal article" date="2013" name="J. Biol. Chem.">
        <title>EPR spectroscopy of MolB2C2-a reveals mechanism of transport for a bacterial type II molybdate importer.</title>
        <authorList>
            <person name="Rice A.J."/>
            <person name="Alvarez F.J."/>
            <person name="Schultz K.M."/>
            <person name="Klug C.S."/>
            <person name="Davidson A.L."/>
            <person name="Pinkett H.W."/>
        </authorList>
    </citation>
    <scope>SUBUNIT</scope>
    <scope>DOMAIN</scope>
</reference>
<reference key="7">
    <citation type="journal article" date="2014" name="J. Biol. Chem.">
        <title>Small substrate transport and mechanism of a molybdate ATP binding cassette transporter in a lipid environment.</title>
        <authorList>
            <person name="Rice A.J."/>
            <person name="Harrison A."/>
            <person name="Alvarez F.J."/>
            <person name="Davidson A.L."/>
            <person name="Pinkett H.W."/>
        </authorList>
    </citation>
    <scope>FUNCTION</scope>
    <scope>CATALYTIC ACTIVITY</scope>
</reference>
<reference evidence="12" key="8">
    <citation type="journal article" date="2007" name="Science">
        <title>An inward-facing conformation of a putative metal-chelate-type ABC transporter.</title>
        <authorList>
            <person name="Pinkett H.W."/>
            <person name="Lee A.T."/>
            <person name="Lum P."/>
            <person name="Locher K.P."/>
            <person name="Rees D.C."/>
        </authorList>
    </citation>
    <scope>X-RAY CRYSTALLOGRAPHY (2.40 ANGSTROMS) IN COMPLEX WITH MOLB</scope>
    <scope>SUBUNIT</scope>
    <scope>SUBCELLULAR LOCATION</scope>
    <source>
        <strain>ATCC 51907 / DSM 11121 / KW20 / Rd</strain>
    </source>
</reference>
<sequence>MNKALSVENLGFYYQAENFLFQQLNFDLNKGDILAVLGQNGCGKSTLLDLLLGIHRPIQGKIEVYQSIGFVPQFFSSPFAYSVLDIVLMGRSTHINTFAKPKSHDYQVAMQALDYLNLTHLAKREFTSLSGGQRQLILIARAIASECKLILLDEPTSALDLANQDIVLSLLIDLAQSQNMTVVFTTHQPNQVVAIANKTLLLNKQNFKFGETRNILTSENLTALFHLPMFEQQAQYKESFFTHFVPLYKTLLK</sequence>
<gene>
    <name evidence="9" type="primary">molC</name>
    <name type="ordered locus">HI_1470</name>
</gene>
<organism>
    <name type="scientific">Haemophilus influenzae (strain ATCC 51907 / DSM 11121 / KW20 / Rd)</name>
    <dbReference type="NCBI Taxonomy" id="71421"/>
    <lineage>
        <taxon>Bacteria</taxon>
        <taxon>Pseudomonadati</taxon>
        <taxon>Pseudomonadota</taxon>
        <taxon>Gammaproteobacteria</taxon>
        <taxon>Pasteurellales</taxon>
        <taxon>Pasteurellaceae</taxon>
        <taxon>Haemophilus</taxon>
    </lineage>
</organism>
<feature type="chain" id="PRO_0000093207" description="Molybdate import ATP-binding protein MolC">
    <location>
        <begin position="1"/>
        <end position="253"/>
    </location>
</feature>
<feature type="domain" description="ABC transporter" evidence="1">
    <location>
        <begin position="5"/>
        <end position="229"/>
    </location>
</feature>
<feature type="binding site" evidence="1">
    <location>
        <begin position="38"/>
        <end position="45"/>
    </location>
    <ligand>
        <name>ATP</name>
        <dbReference type="ChEBI" id="CHEBI:30616"/>
    </ligand>
</feature>
<feature type="strand" evidence="13">
    <location>
        <begin position="3"/>
        <end position="14"/>
    </location>
</feature>
<feature type="turn" evidence="13">
    <location>
        <begin position="15"/>
        <end position="18"/>
    </location>
</feature>
<feature type="strand" evidence="13">
    <location>
        <begin position="19"/>
        <end position="29"/>
    </location>
</feature>
<feature type="strand" evidence="13">
    <location>
        <begin position="33"/>
        <end position="37"/>
    </location>
</feature>
<feature type="strand" evidence="13">
    <location>
        <begin position="40"/>
        <end position="43"/>
    </location>
</feature>
<feature type="helix" evidence="13">
    <location>
        <begin position="44"/>
        <end position="51"/>
    </location>
</feature>
<feature type="strand" evidence="13">
    <location>
        <begin position="58"/>
        <end position="64"/>
    </location>
</feature>
<feature type="strand" evidence="13">
    <location>
        <begin position="68"/>
        <end position="71"/>
    </location>
</feature>
<feature type="helix" evidence="13">
    <location>
        <begin position="83"/>
        <end position="88"/>
    </location>
</feature>
<feature type="helix" evidence="13">
    <location>
        <begin position="89"/>
        <end position="94"/>
    </location>
</feature>
<feature type="helix" evidence="13">
    <location>
        <begin position="103"/>
        <end position="115"/>
    </location>
</feature>
<feature type="helix" evidence="13">
    <location>
        <begin position="119"/>
        <end position="121"/>
    </location>
</feature>
<feature type="helix" evidence="13">
    <location>
        <begin position="126"/>
        <end position="128"/>
    </location>
</feature>
<feature type="helix" evidence="13">
    <location>
        <begin position="131"/>
        <end position="144"/>
    </location>
</feature>
<feature type="strand" evidence="13">
    <location>
        <begin position="148"/>
        <end position="156"/>
    </location>
</feature>
<feature type="helix" evidence="13">
    <location>
        <begin position="161"/>
        <end position="176"/>
    </location>
</feature>
<feature type="strand" evidence="13">
    <location>
        <begin position="181"/>
        <end position="187"/>
    </location>
</feature>
<feature type="helix" evidence="13">
    <location>
        <begin position="189"/>
        <end position="195"/>
    </location>
</feature>
<feature type="strand" evidence="13">
    <location>
        <begin position="197"/>
        <end position="203"/>
    </location>
</feature>
<feature type="strand" evidence="13">
    <location>
        <begin position="206"/>
        <end position="211"/>
    </location>
</feature>
<feature type="helix" evidence="13">
    <location>
        <begin position="212"/>
        <end position="215"/>
    </location>
</feature>
<feature type="helix" evidence="13">
    <location>
        <begin position="218"/>
        <end position="225"/>
    </location>
</feature>
<feature type="strand" evidence="13">
    <location>
        <begin position="229"/>
        <end position="236"/>
    </location>
</feature>
<feature type="strand" evidence="13">
    <location>
        <begin position="239"/>
        <end position="246"/>
    </location>
</feature>
<feature type="helix" evidence="13">
    <location>
        <begin position="249"/>
        <end position="251"/>
    </location>
</feature>